<organism>
    <name type="scientific">Clostridioides difficile (strain 630)</name>
    <name type="common">Peptoclostridium difficile</name>
    <dbReference type="NCBI Taxonomy" id="272563"/>
    <lineage>
        <taxon>Bacteria</taxon>
        <taxon>Bacillati</taxon>
        <taxon>Bacillota</taxon>
        <taxon>Clostridia</taxon>
        <taxon>Peptostreptococcales</taxon>
        <taxon>Peptostreptococcaceae</taxon>
        <taxon>Clostridioides</taxon>
    </lineage>
</organism>
<protein>
    <recommendedName>
        <fullName evidence="1">RNA-binding protein Hfq</fullName>
    </recommendedName>
</protein>
<feature type="chain" id="PRO_0000265148" description="RNA-binding protein Hfq">
    <location>
        <begin position="1"/>
        <end position="86"/>
    </location>
</feature>
<feature type="domain" description="Sm" evidence="2">
    <location>
        <begin position="10"/>
        <end position="71"/>
    </location>
</feature>
<gene>
    <name evidence="1" type="primary">hfq</name>
    <name type="ordered locus">CD630_19740</name>
</gene>
<name>HFQ_CLOD6</name>
<proteinExistence type="inferred from homology"/>
<sequence length="86" mass="9903">MKNTVLNLQDLFLNNARKERIPVTIYLVNGVQVKGLVKGFDSYIILIEGDNRQQNMIYKHAVSTIQPGKYINLTNQNQNNNNNNNR</sequence>
<dbReference type="EMBL" id="AM180355">
    <property type="protein sequence ID" value="CAJ68849.1"/>
    <property type="molecule type" value="Genomic_DNA"/>
</dbReference>
<dbReference type="RefSeq" id="WP_003428780.1">
    <property type="nucleotide sequence ID" value="NZ_JAUPES010000034.1"/>
</dbReference>
<dbReference type="RefSeq" id="YP_001088480.1">
    <property type="nucleotide sequence ID" value="NC_009089.1"/>
</dbReference>
<dbReference type="SMR" id="Q187T2"/>
<dbReference type="STRING" id="272563.CD630_19740"/>
<dbReference type="EnsemblBacteria" id="CAJ68849">
    <property type="protein sequence ID" value="CAJ68849"/>
    <property type="gene ID" value="CD630_19740"/>
</dbReference>
<dbReference type="GeneID" id="66354360"/>
<dbReference type="KEGG" id="cdf:CD630_19740"/>
<dbReference type="KEGG" id="pdc:CDIF630_02179"/>
<dbReference type="PATRIC" id="fig|272563.120.peg.2071"/>
<dbReference type="eggNOG" id="COG1923">
    <property type="taxonomic scope" value="Bacteria"/>
</dbReference>
<dbReference type="OrthoDB" id="9799751at2"/>
<dbReference type="PhylomeDB" id="Q187T2"/>
<dbReference type="BioCyc" id="PDIF272563:G12WB-2116-MONOMER"/>
<dbReference type="Proteomes" id="UP000001978">
    <property type="component" value="Chromosome"/>
</dbReference>
<dbReference type="GO" id="GO:0005829">
    <property type="term" value="C:cytosol"/>
    <property type="evidence" value="ECO:0007669"/>
    <property type="project" value="TreeGrafter"/>
</dbReference>
<dbReference type="GO" id="GO:0003723">
    <property type="term" value="F:RNA binding"/>
    <property type="evidence" value="ECO:0007669"/>
    <property type="project" value="UniProtKB-UniRule"/>
</dbReference>
<dbReference type="GO" id="GO:0006355">
    <property type="term" value="P:regulation of DNA-templated transcription"/>
    <property type="evidence" value="ECO:0007669"/>
    <property type="project" value="InterPro"/>
</dbReference>
<dbReference type="GO" id="GO:0043487">
    <property type="term" value="P:regulation of RNA stability"/>
    <property type="evidence" value="ECO:0007669"/>
    <property type="project" value="TreeGrafter"/>
</dbReference>
<dbReference type="GO" id="GO:0045974">
    <property type="term" value="P:regulation of translation, ncRNA-mediated"/>
    <property type="evidence" value="ECO:0007669"/>
    <property type="project" value="TreeGrafter"/>
</dbReference>
<dbReference type="CDD" id="cd01716">
    <property type="entry name" value="Hfq"/>
    <property type="match status" value="1"/>
</dbReference>
<dbReference type="Gene3D" id="2.30.30.100">
    <property type="match status" value="1"/>
</dbReference>
<dbReference type="HAMAP" id="MF_00436">
    <property type="entry name" value="Hfq"/>
    <property type="match status" value="1"/>
</dbReference>
<dbReference type="InterPro" id="IPR005001">
    <property type="entry name" value="Hfq"/>
</dbReference>
<dbReference type="InterPro" id="IPR010920">
    <property type="entry name" value="LSM_dom_sf"/>
</dbReference>
<dbReference type="InterPro" id="IPR047575">
    <property type="entry name" value="Sm"/>
</dbReference>
<dbReference type="NCBIfam" id="TIGR02383">
    <property type="entry name" value="Hfq"/>
    <property type="match status" value="1"/>
</dbReference>
<dbReference type="NCBIfam" id="NF001602">
    <property type="entry name" value="PRK00395.1"/>
    <property type="match status" value="1"/>
</dbReference>
<dbReference type="PANTHER" id="PTHR34772">
    <property type="entry name" value="RNA-BINDING PROTEIN HFQ"/>
    <property type="match status" value="1"/>
</dbReference>
<dbReference type="PANTHER" id="PTHR34772:SF1">
    <property type="entry name" value="RNA-BINDING PROTEIN HFQ"/>
    <property type="match status" value="1"/>
</dbReference>
<dbReference type="Pfam" id="PF17209">
    <property type="entry name" value="Hfq"/>
    <property type="match status" value="1"/>
</dbReference>
<dbReference type="SUPFAM" id="SSF50182">
    <property type="entry name" value="Sm-like ribonucleoproteins"/>
    <property type="match status" value="1"/>
</dbReference>
<dbReference type="PROSITE" id="PS52002">
    <property type="entry name" value="SM"/>
    <property type="match status" value="1"/>
</dbReference>
<accession>Q187T2</accession>
<comment type="function">
    <text evidence="1">RNA chaperone that binds small regulatory RNA (sRNAs) and mRNAs to facilitate mRNA translational regulation in response to envelope stress, environmental stress and changes in metabolite concentrations. Also binds with high specificity to tRNAs.</text>
</comment>
<comment type="subunit">
    <text evidence="1">Homohexamer.</text>
</comment>
<comment type="similarity">
    <text evidence="1">Belongs to the Hfq family.</text>
</comment>
<evidence type="ECO:0000255" key="1">
    <source>
        <dbReference type="HAMAP-Rule" id="MF_00436"/>
    </source>
</evidence>
<evidence type="ECO:0000255" key="2">
    <source>
        <dbReference type="PROSITE-ProRule" id="PRU01346"/>
    </source>
</evidence>
<keyword id="KW-1185">Reference proteome</keyword>
<keyword id="KW-0694">RNA-binding</keyword>
<keyword id="KW-0346">Stress response</keyword>
<reference key="1">
    <citation type="journal article" date="2006" name="Nat. Genet.">
        <title>The multidrug-resistant human pathogen Clostridium difficile has a highly mobile, mosaic genome.</title>
        <authorList>
            <person name="Sebaihia M."/>
            <person name="Wren B.W."/>
            <person name="Mullany P."/>
            <person name="Fairweather N.F."/>
            <person name="Minton N."/>
            <person name="Stabler R."/>
            <person name="Thomson N.R."/>
            <person name="Roberts A.P."/>
            <person name="Cerdeno-Tarraga A.M."/>
            <person name="Wang H."/>
            <person name="Holden M.T.G."/>
            <person name="Wright A."/>
            <person name="Churcher C."/>
            <person name="Quail M.A."/>
            <person name="Baker S."/>
            <person name="Bason N."/>
            <person name="Brooks K."/>
            <person name="Chillingworth T."/>
            <person name="Cronin A."/>
            <person name="Davis P."/>
            <person name="Dowd L."/>
            <person name="Fraser A."/>
            <person name="Feltwell T."/>
            <person name="Hance Z."/>
            <person name="Holroyd S."/>
            <person name="Jagels K."/>
            <person name="Moule S."/>
            <person name="Mungall K."/>
            <person name="Price C."/>
            <person name="Rabbinowitsch E."/>
            <person name="Sharp S."/>
            <person name="Simmonds M."/>
            <person name="Stevens K."/>
            <person name="Unwin L."/>
            <person name="Whithead S."/>
            <person name="Dupuy B."/>
            <person name="Dougan G."/>
            <person name="Barrell B."/>
            <person name="Parkhill J."/>
        </authorList>
    </citation>
    <scope>NUCLEOTIDE SEQUENCE [LARGE SCALE GENOMIC DNA]</scope>
    <source>
        <strain>630</strain>
    </source>
</reference>